<evidence type="ECO:0000255" key="1">
    <source>
        <dbReference type="HAMAP-Rule" id="MF_03168"/>
    </source>
</evidence>
<sequence>MAPNAAAVAPKPEQEQATGINAILLGPPGSGKGTQAPLLKEKFCVCHLSTGDMLRAEIAAGSKLGAQLKKVMDEGKLVSDDLVVDMIDSNLDKPECKNGFLLDGFPRTVVQAEKLDDLLEKRKTGLDAVVEFGIDDSLLVRRITGRLIHQASGRSYHEEFAPPKVAMTDDVTGEPLMRRSDDNAAALVKRLEAYHKQTKPLADYYALRGLHFRVDAAQSASRVFENIDSIFTSQRKARMGL</sequence>
<reference key="1">
    <citation type="journal article" date="2007" name="BMC Genomics">
        <title>An annotated catalogue of salivary gland transcripts in the adult female mosquito, Aedes aegypti.</title>
        <authorList>
            <person name="Ribeiro J.M.C."/>
            <person name="Arca B."/>
            <person name="Lombardo F."/>
            <person name="Calvo E."/>
            <person name="Phan V.M."/>
            <person name="Chandra P.K."/>
            <person name="Wikel S.K."/>
        </authorList>
    </citation>
    <scope>NUCLEOTIDE SEQUENCE [LARGE SCALE MRNA]</scope>
    <source>
        <strain>Black-eyed Liverpool</strain>
        <tissue>Salivary gland</tissue>
    </source>
</reference>
<reference key="2">
    <citation type="journal article" date="2007" name="Science">
        <title>Genome sequence of Aedes aegypti, a major arbovirus vector.</title>
        <authorList>
            <person name="Nene V."/>
            <person name="Wortman J.R."/>
            <person name="Lawson D."/>
            <person name="Haas B.J."/>
            <person name="Kodira C.D."/>
            <person name="Tu Z.J."/>
            <person name="Loftus B.J."/>
            <person name="Xi Z."/>
            <person name="Megy K."/>
            <person name="Grabherr M."/>
            <person name="Ren Q."/>
            <person name="Zdobnov E.M."/>
            <person name="Lobo N.F."/>
            <person name="Campbell K.S."/>
            <person name="Brown S.E."/>
            <person name="Bonaldo M.F."/>
            <person name="Zhu J."/>
            <person name="Sinkins S.P."/>
            <person name="Hogenkamp D.G."/>
            <person name="Amedeo P."/>
            <person name="Arensburger P."/>
            <person name="Atkinson P.W."/>
            <person name="Bidwell S.L."/>
            <person name="Biedler J."/>
            <person name="Birney E."/>
            <person name="Bruggner R.V."/>
            <person name="Costas J."/>
            <person name="Coy M.R."/>
            <person name="Crabtree J."/>
            <person name="Crawford M."/>
            <person name="DeBruyn B."/>
            <person name="DeCaprio D."/>
            <person name="Eiglmeier K."/>
            <person name="Eisenstadt E."/>
            <person name="El-Dorry H."/>
            <person name="Gelbart W.M."/>
            <person name="Gomes S.L."/>
            <person name="Hammond M."/>
            <person name="Hannick L.I."/>
            <person name="Hogan J.R."/>
            <person name="Holmes M.H."/>
            <person name="Jaffe D."/>
            <person name="Johnston S.J."/>
            <person name="Kennedy R.C."/>
            <person name="Koo H."/>
            <person name="Kravitz S."/>
            <person name="Kriventseva E.V."/>
            <person name="Kulp D."/>
            <person name="Labutti K."/>
            <person name="Lee E."/>
            <person name="Li S."/>
            <person name="Lovin D.D."/>
            <person name="Mao C."/>
            <person name="Mauceli E."/>
            <person name="Menck C.F."/>
            <person name="Miller J.R."/>
            <person name="Montgomery P."/>
            <person name="Mori A."/>
            <person name="Nascimento A.L."/>
            <person name="Naveira H.F."/>
            <person name="Nusbaum C."/>
            <person name="O'Leary S.B."/>
            <person name="Orvis J."/>
            <person name="Pertea M."/>
            <person name="Quesneville H."/>
            <person name="Reidenbach K.R."/>
            <person name="Rogers Y.-H.C."/>
            <person name="Roth C.W."/>
            <person name="Schneider J.R."/>
            <person name="Schatz M."/>
            <person name="Shumway M."/>
            <person name="Stanke M."/>
            <person name="Stinson E.O."/>
            <person name="Tubio J.M.C."/>
            <person name="Vanzee J.P."/>
            <person name="Verjovski-Almeida S."/>
            <person name="Werner D."/>
            <person name="White O.R."/>
            <person name="Wyder S."/>
            <person name="Zeng Q."/>
            <person name="Zhao Q."/>
            <person name="Zhao Y."/>
            <person name="Hill C.A."/>
            <person name="Raikhel A.S."/>
            <person name="Soares M.B."/>
            <person name="Knudson D.L."/>
            <person name="Lee N.H."/>
            <person name="Galagan J."/>
            <person name="Salzberg S.L."/>
            <person name="Paulsen I.T."/>
            <person name="Dimopoulos G."/>
            <person name="Collins F.H."/>
            <person name="Bruce B."/>
            <person name="Fraser-Liggett C.M."/>
            <person name="Severson D.W."/>
        </authorList>
    </citation>
    <scope>NUCLEOTIDE SEQUENCE [LARGE SCALE GENOMIC DNA]</scope>
    <source>
        <strain>LVPib12</strain>
    </source>
</reference>
<name>KAD2_AEDAE</name>
<feature type="chain" id="PRO_0000365700" description="Adenylate kinase">
    <location>
        <begin position="1"/>
        <end position="241"/>
    </location>
</feature>
<feature type="region of interest" description="NMP" evidence="1">
    <location>
        <begin position="49"/>
        <end position="78"/>
    </location>
</feature>
<feature type="region of interest" description="LID" evidence="1">
    <location>
        <begin position="145"/>
        <end position="182"/>
    </location>
</feature>
<feature type="binding site" evidence="1">
    <location>
        <begin position="29"/>
        <end position="34"/>
    </location>
    <ligand>
        <name>ATP</name>
        <dbReference type="ChEBI" id="CHEBI:30616"/>
    </ligand>
</feature>
<feature type="binding site" evidence="1">
    <location>
        <position position="50"/>
    </location>
    <ligand>
        <name>AMP</name>
        <dbReference type="ChEBI" id="CHEBI:456215"/>
    </ligand>
</feature>
<feature type="binding site" evidence="1">
    <location>
        <position position="55"/>
    </location>
    <ligand>
        <name>AMP</name>
        <dbReference type="ChEBI" id="CHEBI:456215"/>
    </ligand>
</feature>
<feature type="binding site" evidence="1">
    <location>
        <begin position="76"/>
        <end position="78"/>
    </location>
    <ligand>
        <name>AMP</name>
        <dbReference type="ChEBI" id="CHEBI:456215"/>
    </ligand>
</feature>
<feature type="binding site" evidence="1">
    <location>
        <begin position="104"/>
        <end position="107"/>
    </location>
    <ligand>
        <name>AMP</name>
        <dbReference type="ChEBI" id="CHEBI:456215"/>
    </ligand>
</feature>
<feature type="binding site" evidence="1">
    <location>
        <position position="111"/>
    </location>
    <ligand>
        <name>AMP</name>
        <dbReference type="ChEBI" id="CHEBI:456215"/>
    </ligand>
</feature>
<feature type="binding site" evidence="1">
    <location>
        <position position="146"/>
    </location>
    <ligand>
        <name>ATP</name>
        <dbReference type="ChEBI" id="CHEBI:30616"/>
    </ligand>
</feature>
<feature type="binding site" evidence="1">
    <location>
        <begin position="155"/>
        <end position="156"/>
    </location>
    <ligand>
        <name>ATP</name>
        <dbReference type="ChEBI" id="CHEBI:30616"/>
    </ligand>
</feature>
<feature type="binding site" evidence="1">
    <location>
        <position position="179"/>
    </location>
    <ligand>
        <name>AMP</name>
        <dbReference type="ChEBI" id="CHEBI:456215"/>
    </ligand>
</feature>
<feature type="binding site" evidence="1">
    <location>
        <position position="190"/>
    </location>
    <ligand>
        <name>AMP</name>
        <dbReference type="ChEBI" id="CHEBI:456215"/>
    </ligand>
</feature>
<feature type="binding site" evidence="1">
    <location>
        <position position="218"/>
    </location>
    <ligand>
        <name>ATP</name>
        <dbReference type="ChEBI" id="CHEBI:30616"/>
    </ligand>
</feature>
<protein>
    <recommendedName>
        <fullName evidence="1">Adenylate kinase</fullName>
        <ecNumber evidence="1">2.7.4.3</ecNumber>
    </recommendedName>
    <alternativeName>
        <fullName evidence="1">ATP-AMP transphosphorylase</fullName>
    </alternativeName>
    <alternativeName>
        <fullName evidence="1">ATP:AMP phosphotransferase</fullName>
    </alternativeName>
    <alternativeName>
        <fullName evidence="1">Adenylate kinase cytosolic and mitochondrial</fullName>
    </alternativeName>
    <alternativeName>
        <fullName evidence="1">Adenylate monophosphate kinase</fullName>
    </alternativeName>
</protein>
<comment type="function">
    <text evidence="1">Catalyzes the reversible transfer of the terminal phosphate group between ATP and AMP. Plays an important role in cellular energy homeostasis and in adenine nucleotide metabolism. Adenylate kinase activity is critical for regulation of the phosphate utilization and the AMP de novo biosynthesis pathways.</text>
</comment>
<comment type="catalytic activity">
    <reaction evidence="1">
        <text>AMP + ATP = 2 ADP</text>
        <dbReference type="Rhea" id="RHEA:12973"/>
        <dbReference type="ChEBI" id="CHEBI:30616"/>
        <dbReference type="ChEBI" id="CHEBI:456215"/>
        <dbReference type="ChEBI" id="CHEBI:456216"/>
        <dbReference type="EC" id="2.7.4.3"/>
    </reaction>
</comment>
<comment type="subunit">
    <text evidence="1">Monomer.</text>
</comment>
<comment type="subcellular location">
    <subcellularLocation>
        <location evidence="1">Cytoplasm</location>
        <location evidence="1">Cytosol</location>
    </subcellularLocation>
    <subcellularLocation>
        <location evidence="1">Mitochondrion intermembrane space</location>
    </subcellularLocation>
    <text evidence="1">Predominantly mitochondrial.</text>
</comment>
<comment type="domain">
    <text evidence="1">Consists of three domains, a large central CORE domain and two small peripheral domains, NMPbind and LID, which undergo movements during catalysis. The LID domain closes over the site of phosphoryl transfer upon ATP binding. Assembling and dissambling the active center during each catalytic cycle provides an effective means to prevent ATP hydrolysis.</text>
</comment>
<comment type="similarity">
    <text evidence="1">Belongs to the adenylate kinase family. AK2 subfamily.</text>
</comment>
<dbReference type="EC" id="2.7.4.3" evidence="1"/>
<dbReference type="EMBL" id="DQ440444">
    <property type="protein sequence ID" value="ABF18477.1"/>
    <property type="molecule type" value="mRNA"/>
</dbReference>
<dbReference type="EMBL" id="CH477917">
    <property type="protein sequence ID" value="EAT35079.1"/>
    <property type="molecule type" value="Genomic_DNA"/>
</dbReference>
<dbReference type="SMR" id="Q1HQK0"/>
<dbReference type="FunCoup" id="Q1HQK0">
    <property type="interactions" value="1521"/>
</dbReference>
<dbReference type="STRING" id="7159.Q1HQK0"/>
<dbReference type="PaxDb" id="7159-AAEL012731-PA"/>
<dbReference type="EnsemblMetazoa" id="AAEL012731-RA">
    <property type="protein sequence ID" value="AAEL012731-PA"/>
    <property type="gene ID" value="AAEL012731"/>
</dbReference>
<dbReference type="GeneID" id="5576745"/>
<dbReference type="KEGG" id="aag:5576745"/>
<dbReference type="CTD" id="204"/>
<dbReference type="VEuPathDB" id="VectorBase:AAEL012731"/>
<dbReference type="eggNOG" id="KOG3078">
    <property type="taxonomic scope" value="Eukaryota"/>
</dbReference>
<dbReference type="HOGENOM" id="CLU_032354_1_0_1"/>
<dbReference type="InParanoid" id="Q1HQK0"/>
<dbReference type="OMA" id="HYKVDAA"/>
<dbReference type="OrthoDB" id="439792at2759"/>
<dbReference type="PhylomeDB" id="Q1HQK0"/>
<dbReference type="Proteomes" id="UP000008820">
    <property type="component" value="Chromosome 2"/>
</dbReference>
<dbReference type="Proteomes" id="UP000682892">
    <property type="component" value="Unassembled WGS sequence"/>
</dbReference>
<dbReference type="GO" id="GO:0005829">
    <property type="term" value="C:cytosol"/>
    <property type="evidence" value="ECO:0007669"/>
    <property type="project" value="UniProtKB-SubCell"/>
</dbReference>
<dbReference type="GO" id="GO:0005758">
    <property type="term" value="C:mitochondrial intermembrane space"/>
    <property type="evidence" value="ECO:0007669"/>
    <property type="project" value="UniProtKB-SubCell"/>
</dbReference>
<dbReference type="GO" id="GO:0004017">
    <property type="term" value="F:adenylate kinase activity"/>
    <property type="evidence" value="ECO:0007669"/>
    <property type="project" value="UniProtKB-UniRule"/>
</dbReference>
<dbReference type="GO" id="GO:0005524">
    <property type="term" value="F:ATP binding"/>
    <property type="evidence" value="ECO:0007669"/>
    <property type="project" value="UniProtKB-KW"/>
</dbReference>
<dbReference type="GO" id="GO:0006172">
    <property type="term" value="P:ADP biosynthetic process"/>
    <property type="evidence" value="ECO:0007669"/>
    <property type="project" value="UniProtKB-UniRule"/>
</dbReference>
<dbReference type="GO" id="GO:0046033">
    <property type="term" value="P:AMP metabolic process"/>
    <property type="evidence" value="ECO:0007669"/>
    <property type="project" value="UniProtKB-UniRule"/>
</dbReference>
<dbReference type="GO" id="GO:0046034">
    <property type="term" value="P:ATP metabolic process"/>
    <property type="evidence" value="ECO:0007669"/>
    <property type="project" value="UniProtKB-UniRule"/>
</dbReference>
<dbReference type="CDD" id="cd01428">
    <property type="entry name" value="ADK"/>
    <property type="match status" value="1"/>
</dbReference>
<dbReference type="FunFam" id="3.40.50.300:FF:000106">
    <property type="entry name" value="Adenylate kinase mitochondrial"/>
    <property type="match status" value="1"/>
</dbReference>
<dbReference type="Gene3D" id="3.40.50.300">
    <property type="entry name" value="P-loop containing nucleotide triphosphate hydrolases"/>
    <property type="match status" value="1"/>
</dbReference>
<dbReference type="HAMAP" id="MF_00235">
    <property type="entry name" value="Adenylate_kinase_Adk"/>
    <property type="match status" value="1"/>
</dbReference>
<dbReference type="HAMAP" id="MF_03168">
    <property type="entry name" value="Adenylate_kinase_AK2"/>
    <property type="match status" value="1"/>
</dbReference>
<dbReference type="InterPro" id="IPR006259">
    <property type="entry name" value="Adenyl_kin_sub"/>
</dbReference>
<dbReference type="InterPro" id="IPR000850">
    <property type="entry name" value="Adenylat/UMP-CMP_kin"/>
</dbReference>
<dbReference type="InterPro" id="IPR033690">
    <property type="entry name" value="Adenylat_kinase_CS"/>
</dbReference>
<dbReference type="InterPro" id="IPR007862">
    <property type="entry name" value="Adenylate_kinase_lid-dom"/>
</dbReference>
<dbReference type="InterPro" id="IPR028587">
    <property type="entry name" value="AK2"/>
</dbReference>
<dbReference type="InterPro" id="IPR027417">
    <property type="entry name" value="P-loop_NTPase"/>
</dbReference>
<dbReference type="NCBIfam" id="TIGR01351">
    <property type="entry name" value="adk"/>
    <property type="match status" value="1"/>
</dbReference>
<dbReference type="NCBIfam" id="NF001381">
    <property type="entry name" value="PRK00279.1-3"/>
    <property type="match status" value="1"/>
</dbReference>
<dbReference type="NCBIfam" id="NF011100">
    <property type="entry name" value="PRK14527.1"/>
    <property type="match status" value="1"/>
</dbReference>
<dbReference type="PANTHER" id="PTHR23359">
    <property type="entry name" value="NUCLEOTIDE KINASE"/>
    <property type="match status" value="1"/>
</dbReference>
<dbReference type="Pfam" id="PF00406">
    <property type="entry name" value="ADK"/>
    <property type="match status" value="1"/>
</dbReference>
<dbReference type="Pfam" id="PF05191">
    <property type="entry name" value="ADK_lid"/>
    <property type="match status" value="1"/>
</dbReference>
<dbReference type="PRINTS" id="PR00094">
    <property type="entry name" value="ADENYLTKNASE"/>
</dbReference>
<dbReference type="SUPFAM" id="SSF52540">
    <property type="entry name" value="P-loop containing nucleoside triphosphate hydrolases"/>
    <property type="match status" value="1"/>
</dbReference>
<dbReference type="PROSITE" id="PS00113">
    <property type="entry name" value="ADENYLATE_KINASE"/>
    <property type="match status" value="1"/>
</dbReference>
<accession>Q1HQK0</accession>
<proteinExistence type="evidence at transcript level"/>
<gene>
    <name evidence="1" type="primary">Adk2</name>
    <name type="ORF">AAEL012731</name>
</gene>
<organism>
    <name type="scientific">Aedes aegypti</name>
    <name type="common">Yellowfever mosquito</name>
    <name type="synonym">Culex aegypti</name>
    <dbReference type="NCBI Taxonomy" id="7159"/>
    <lineage>
        <taxon>Eukaryota</taxon>
        <taxon>Metazoa</taxon>
        <taxon>Ecdysozoa</taxon>
        <taxon>Arthropoda</taxon>
        <taxon>Hexapoda</taxon>
        <taxon>Insecta</taxon>
        <taxon>Pterygota</taxon>
        <taxon>Neoptera</taxon>
        <taxon>Endopterygota</taxon>
        <taxon>Diptera</taxon>
        <taxon>Nematocera</taxon>
        <taxon>Culicoidea</taxon>
        <taxon>Culicidae</taxon>
        <taxon>Culicinae</taxon>
        <taxon>Aedini</taxon>
        <taxon>Aedes</taxon>
        <taxon>Stegomyia</taxon>
    </lineage>
</organism>
<keyword id="KW-0067">ATP-binding</keyword>
<keyword id="KW-0963">Cytoplasm</keyword>
<keyword id="KW-0418">Kinase</keyword>
<keyword id="KW-0496">Mitochondrion</keyword>
<keyword id="KW-0547">Nucleotide-binding</keyword>
<keyword id="KW-1185">Reference proteome</keyword>
<keyword id="KW-0808">Transferase</keyword>